<reference evidence="10" key="1">
    <citation type="journal article" date="1998" name="Science">
        <title>Genome sequence of the nematode C. elegans: a platform for investigating biology.</title>
        <authorList>
            <consortium name="The C. elegans sequencing consortium"/>
        </authorList>
    </citation>
    <scope>NUCLEOTIDE SEQUENCE [LARGE SCALE GENOMIC DNA]</scope>
    <scope>ALTERNATIVE SPLICING</scope>
    <source>
        <strain>Bristol N2</strain>
    </source>
</reference>
<reference evidence="10" key="2">
    <citation type="journal article" date="2001" name="EMBO Rep.">
        <title>A protein-protein interaction map of the Caenorhabditis elegans 26S proteasome.</title>
        <authorList>
            <person name="Davy A."/>
            <person name="Bello P."/>
            <person name="Thierry-Mieg N."/>
            <person name="Vaglio P."/>
            <person name="Hitti J."/>
            <person name="Doucette-Stamm L."/>
            <person name="Thierry-Mieg D."/>
            <person name="Reboul J."/>
            <person name="Boulton S."/>
            <person name="Walhout A.J."/>
            <person name="Coux O."/>
            <person name="Vidal M."/>
        </authorList>
    </citation>
    <scope>PROBABLE FUNCTION</scope>
</reference>
<reference evidence="10" key="3">
    <citation type="journal article" date="2008" name="RNA">
        <title>A novel biochemical method to identify target genes of individual microRNAs: identification of a new Caenorhabditis elegans let-7 target.</title>
        <authorList>
            <person name="Andachi Y."/>
        </authorList>
    </citation>
    <scope>DISRUPTION PHENOTYPE</scope>
</reference>
<reference key="4">
    <citation type="journal article" date="2012" name="Nature">
        <title>RPN-6 determines C. elegans longevity under proteotoxic stress conditions.</title>
        <authorList>
            <person name="Vilchez D."/>
            <person name="Morantte I."/>
            <person name="Liu Z."/>
            <person name="Douglas P.M."/>
            <person name="Merkwirth C."/>
            <person name="Rodrigues A.P."/>
            <person name="Manning G."/>
            <person name="Dillin A."/>
        </authorList>
    </citation>
    <scope>FUNCTION</scope>
    <scope>INDUCTION</scope>
</reference>
<comment type="function">
    <text evidence="7">Component of the lid subcomplex of the 26S proteasome, a multiprotein complex involved in the ATP-dependent degradation of ubiquitinated proteins. In the complex, rpn-6.1 is required for proteasome assembly. Plays a key role in increased proteasome activity in response to proteotoxic stress: induced by daf-16, promoting enhanced assembly of the 26S proteasome and higher proteasome activity, leading to extended lifespan.</text>
</comment>
<comment type="subunit">
    <text evidence="1">Component of the lid subcomplex of the 19S proteasome regulatory particle complex (also named PA700 complex). The 26S proteasome consists of a 20S proteasome core and two 19S regulatory subunits (By similarity).</text>
</comment>
<comment type="alternative products">
    <event type="alternative splicing"/>
    <isoform>
        <id>Q20938-1</id>
        <name evidence="8">a</name>
        <sequence type="displayed"/>
    </isoform>
    <isoform>
        <id>Q20938-2</id>
        <name evidence="8">b</name>
        <sequence type="described" ref="VSP_039825"/>
    </isoform>
</comment>
<comment type="induction">
    <text evidence="7">By daf-16.</text>
</comment>
<comment type="disruption phenotype">
    <text evidence="6">Embryonic lethal, larval arrest.</text>
</comment>
<comment type="similarity">
    <text evidence="3">Belongs to the proteasome subunit S9 family.</text>
</comment>
<protein>
    <recommendedName>
        <fullName evidence="2">Probable 26S proteasome regulatory subunit rpn-6.1</fullName>
    </recommendedName>
</protein>
<feature type="chain" id="PRO_0000399034" description="Probable 26S proteasome regulatory subunit rpn-6.1">
    <location>
        <begin position="1"/>
        <end position="438"/>
    </location>
</feature>
<feature type="domain" description="PCI" evidence="4">
    <location>
        <begin position="239"/>
        <end position="408"/>
    </location>
</feature>
<feature type="region of interest" description="Disordered" evidence="5">
    <location>
        <begin position="1"/>
        <end position="30"/>
    </location>
</feature>
<feature type="compositionally biased region" description="Basic and acidic residues" evidence="5">
    <location>
        <begin position="1"/>
        <end position="10"/>
    </location>
</feature>
<feature type="splice variant" id="VSP_039825" description="In isoform b." evidence="9">
    <location>
        <begin position="1"/>
        <end position="18"/>
    </location>
</feature>
<evidence type="ECO:0000250" key="1"/>
<evidence type="ECO:0000250" key="2">
    <source>
        <dbReference type="UniProtKB" id="P34481"/>
    </source>
</evidence>
<evidence type="ECO:0000255" key="3"/>
<evidence type="ECO:0000255" key="4">
    <source>
        <dbReference type="PROSITE-ProRule" id="PRU01185"/>
    </source>
</evidence>
<evidence type="ECO:0000256" key="5">
    <source>
        <dbReference type="SAM" id="MobiDB-lite"/>
    </source>
</evidence>
<evidence type="ECO:0000269" key="6">
    <source>
    </source>
</evidence>
<evidence type="ECO:0000269" key="7">
    <source>
    </source>
</evidence>
<evidence type="ECO:0000269" key="8">
    <source>
    </source>
</evidence>
<evidence type="ECO:0000303" key="9">
    <source>
    </source>
</evidence>
<evidence type="ECO:0000305" key="10"/>
<evidence type="ECO:0000312" key="11">
    <source>
        <dbReference type="WormBase" id="F57B9.10a"/>
    </source>
</evidence>
<accession>Q20938</accession>
<accession>Q5DX45</accession>
<organism>
    <name type="scientific">Caenorhabditis elegans</name>
    <dbReference type="NCBI Taxonomy" id="6239"/>
    <lineage>
        <taxon>Eukaryota</taxon>
        <taxon>Metazoa</taxon>
        <taxon>Ecdysozoa</taxon>
        <taxon>Nematoda</taxon>
        <taxon>Chromadorea</taxon>
        <taxon>Rhabditida</taxon>
        <taxon>Rhabditina</taxon>
        <taxon>Rhabditomorpha</taxon>
        <taxon>Rhabditoidea</taxon>
        <taxon>Rhabditidae</taxon>
        <taxon>Peloderinae</taxon>
        <taxon>Caenorhabditis</taxon>
    </lineage>
</organism>
<dbReference type="EMBL" id="FO081266">
    <property type="protein sequence ID" value="CCD70319.1"/>
    <property type="molecule type" value="Genomic_DNA"/>
</dbReference>
<dbReference type="EMBL" id="FO081266">
    <property type="protein sequence ID" value="CCD70320.1"/>
    <property type="molecule type" value="Genomic_DNA"/>
</dbReference>
<dbReference type="PIR" id="H88493">
    <property type="entry name" value="H88493"/>
</dbReference>
<dbReference type="RefSeq" id="NP_001022621.1">
    <molecule id="Q20938-1"/>
    <property type="nucleotide sequence ID" value="NM_001027450.5"/>
</dbReference>
<dbReference type="RefSeq" id="NP_001022622.1">
    <molecule id="Q20938-2"/>
    <property type="nucleotide sequence ID" value="NM_001027451.6"/>
</dbReference>
<dbReference type="SMR" id="Q20938"/>
<dbReference type="BioGRID" id="41186">
    <property type="interactions" value="56"/>
</dbReference>
<dbReference type="FunCoup" id="Q20938">
    <property type="interactions" value="3241"/>
</dbReference>
<dbReference type="STRING" id="6239.F57B9.10a.1"/>
<dbReference type="PaxDb" id="6239-F57B9.10a"/>
<dbReference type="PeptideAtlas" id="Q20938"/>
<dbReference type="EnsemblMetazoa" id="F57B9.10a.1">
    <molecule id="Q20938-1"/>
    <property type="protein sequence ID" value="F57B9.10a.1"/>
    <property type="gene ID" value="WBGene00004462"/>
</dbReference>
<dbReference type="EnsemblMetazoa" id="F57B9.10b.1">
    <molecule id="Q20938-2"/>
    <property type="protein sequence ID" value="F57B9.10b.1"/>
    <property type="gene ID" value="WBGene00004462"/>
</dbReference>
<dbReference type="GeneID" id="175972"/>
<dbReference type="KEGG" id="cel:CELE_F57B9.10"/>
<dbReference type="UCSC" id="F57B9.10a">
    <property type="organism name" value="c. elegans"/>
</dbReference>
<dbReference type="AGR" id="WB:WBGene00004462"/>
<dbReference type="CTD" id="175972"/>
<dbReference type="WormBase" id="F57B9.10a">
    <molecule id="Q20938-1"/>
    <property type="protein sequence ID" value="CE25011"/>
    <property type="gene ID" value="WBGene00004462"/>
    <property type="gene designation" value="rpn-6.1"/>
</dbReference>
<dbReference type="WormBase" id="F57B9.10b">
    <molecule id="Q20938-2"/>
    <property type="protein sequence ID" value="CE38077"/>
    <property type="gene ID" value="WBGene00004462"/>
    <property type="gene designation" value="rpn-6.1"/>
</dbReference>
<dbReference type="eggNOG" id="KOG1463">
    <property type="taxonomic scope" value="Eukaryota"/>
</dbReference>
<dbReference type="GeneTree" id="ENSGT00530000063301"/>
<dbReference type="InParanoid" id="Q20938"/>
<dbReference type="OMA" id="ESKIYHA"/>
<dbReference type="OrthoDB" id="1418352at2759"/>
<dbReference type="PhylomeDB" id="Q20938"/>
<dbReference type="Reactome" id="R-CEL-1234176">
    <property type="pathway name" value="Oxygen-dependent proline hydroxylation of Hypoxia-inducible Factor Alpha"/>
</dbReference>
<dbReference type="Reactome" id="R-CEL-1236978">
    <property type="pathway name" value="Cross-presentation of soluble exogenous antigens (endosomes)"/>
</dbReference>
<dbReference type="Reactome" id="R-CEL-187577">
    <property type="pathway name" value="SCF(Skp2)-mediated degradation of p27/p21"/>
</dbReference>
<dbReference type="Reactome" id="R-CEL-195253">
    <property type="pathway name" value="Degradation of beta-catenin by the destruction complex"/>
</dbReference>
<dbReference type="Reactome" id="R-CEL-349425">
    <property type="pathway name" value="Autodegradation of the E3 ubiquitin ligase COP1"/>
</dbReference>
<dbReference type="Reactome" id="R-CEL-350562">
    <property type="pathway name" value="Regulation of ornithine decarboxylase (ODC)"/>
</dbReference>
<dbReference type="Reactome" id="R-CEL-382556">
    <property type="pathway name" value="ABC-family proteins mediated transport"/>
</dbReference>
<dbReference type="Reactome" id="R-CEL-4608870">
    <property type="pathway name" value="Asymmetric localization of PCP proteins"/>
</dbReference>
<dbReference type="Reactome" id="R-CEL-4641258">
    <property type="pathway name" value="Degradation of DVL"/>
</dbReference>
<dbReference type="Reactome" id="R-CEL-5632684">
    <property type="pathway name" value="Hedgehog 'on' state"/>
</dbReference>
<dbReference type="Reactome" id="R-CEL-5687128">
    <property type="pathway name" value="MAPK6/MAPK4 signaling"/>
</dbReference>
<dbReference type="Reactome" id="R-CEL-5689603">
    <property type="pathway name" value="UCH proteinases"/>
</dbReference>
<dbReference type="Reactome" id="R-CEL-5689880">
    <property type="pathway name" value="Ub-specific processing proteases"/>
</dbReference>
<dbReference type="Reactome" id="R-CEL-6798695">
    <property type="pathway name" value="Neutrophil degranulation"/>
</dbReference>
<dbReference type="Reactome" id="R-CEL-68949">
    <property type="pathway name" value="Orc1 removal from chromatin"/>
</dbReference>
<dbReference type="Reactome" id="R-CEL-69017">
    <property type="pathway name" value="CDK-mediated phosphorylation and removal of Cdc6"/>
</dbReference>
<dbReference type="Reactome" id="R-CEL-69601">
    <property type="pathway name" value="Ubiquitin Mediated Degradation of Phosphorylated Cdc25A"/>
</dbReference>
<dbReference type="Reactome" id="R-CEL-75815">
    <property type="pathway name" value="Ubiquitin-dependent degradation of Cyclin D"/>
</dbReference>
<dbReference type="Reactome" id="R-CEL-8854050">
    <property type="pathway name" value="FBXL7 down-regulates AURKA during mitotic entry and in early mitosis"/>
</dbReference>
<dbReference type="Reactome" id="R-CEL-8939902">
    <property type="pathway name" value="Regulation of RUNX2 expression and activity"/>
</dbReference>
<dbReference type="Reactome" id="R-CEL-8941858">
    <property type="pathway name" value="Regulation of RUNX3 expression and activity"/>
</dbReference>
<dbReference type="Reactome" id="R-CEL-8948751">
    <property type="pathway name" value="Regulation of PTEN stability and activity"/>
</dbReference>
<dbReference type="Reactome" id="R-CEL-8951664">
    <property type="pathway name" value="Neddylation"/>
</dbReference>
<dbReference type="Reactome" id="R-CEL-9755511">
    <property type="pathway name" value="KEAP1-NFE2L2 pathway"/>
</dbReference>
<dbReference type="Reactome" id="R-CEL-9762114">
    <property type="pathway name" value="GSK3B and BTRC:CUL1-mediated-degradation of NFE2L2"/>
</dbReference>
<dbReference type="Reactome" id="R-CEL-983168">
    <property type="pathway name" value="Antigen processing: Ubiquitination &amp; Proteasome degradation"/>
</dbReference>
<dbReference type="Reactome" id="R-CEL-9907900">
    <property type="pathway name" value="Proteasome assembly"/>
</dbReference>
<dbReference type="PRO" id="PR:Q20938"/>
<dbReference type="Proteomes" id="UP000001940">
    <property type="component" value="Chromosome III"/>
</dbReference>
<dbReference type="Bgee" id="WBGene00004462">
    <property type="expression patterns" value="Expressed in germ line (C elegans) and 4 other cell types or tissues"/>
</dbReference>
<dbReference type="GO" id="GO:0005634">
    <property type="term" value="C:nucleus"/>
    <property type="evidence" value="ECO:0000314"/>
    <property type="project" value="WormBase"/>
</dbReference>
<dbReference type="GO" id="GO:0022624">
    <property type="term" value="C:proteasome accessory complex"/>
    <property type="evidence" value="ECO:0000304"/>
    <property type="project" value="UniProtKB"/>
</dbReference>
<dbReference type="GO" id="GO:0008541">
    <property type="term" value="C:proteasome regulatory particle, lid subcomplex"/>
    <property type="evidence" value="ECO:0000318"/>
    <property type="project" value="GO_Central"/>
</dbReference>
<dbReference type="GO" id="GO:0005198">
    <property type="term" value="F:structural molecule activity"/>
    <property type="evidence" value="ECO:0000318"/>
    <property type="project" value="GO_Central"/>
</dbReference>
<dbReference type="GO" id="GO:0008340">
    <property type="term" value="P:determination of adult lifespan"/>
    <property type="evidence" value="ECO:0000314"/>
    <property type="project" value="UniProtKB"/>
</dbReference>
<dbReference type="GO" id="GO:0043248">
    <property type="term" value="P:proteasome assembly"/>
    <property type="evidence" value="ECO:0000314"/>
    <property type="project" value="UniProtKB"/>
</dbReference>
<dbReference type="GO" id="GO:0006511">
    <property type="term" value="P:ubiquitin-dependent protein catabolic process"/>
    <property type="evidence" value="ECO:0000314"/>
    <property type="project" value="UniProtKB"/>
</dbReference>
<dbReference type="FunFam" id="1.25.40.570:FF:000016">
    <property type="entry name" value="26S proteasome regulatory subunit"/>
    <property type="match status" value="1"/>
</dbReference>
<dbReference type="Gene3D" id="1.25.40.570">
    <property type="match status" value="1"/>
</dbReference>
<dbReference type="InterPro" id="IPR050871">
    <property type="entry name" value="26S_Proteasome/COP9_Components"/>
</dbReference>
<dbReference type="InterPro" id="IPR000717">
    <property type="entry name" value="PCI_dom"/>
</dbReference>
<dbReference type="InterPro" id="IPR040780">
    <property type="entry name" value="Rpn6_C_helix"/>
</dbReference>
<dbReference type="InterPro" id="IPR040773">
    <property type="entry name" value="Rpn6_N"/>
</dbReference>
<dbReference type="InterPro" id="IPR036390">
    <property type="entry name" value="WH_DNA-bd_sf"/>
</dbReference>
<dbReference type="PANTHER" id="PTHR10678">
    <property type="entry name" value="26S PROTEASOME NON-ATPASE REGULATORY SUBUNIT 11/COP9 SIGNALOSOME COMPLEX SUBUNIT 2"/>
    <property type="match status" value="1"/>
</dbReference>
<dbReference type="Pfam" id="PF01399">
    <property type="entry name" value="PCI"/>
    <property type="match status" value="1"/>
</dbReference>
<dbReference type="Pfam" id="PF18503">
    <property type="entry name" value="RPN6_C_helix"/>
    <property type="match status" value="1"/>
</dbReference>
<dbReference type="Pfam" id="PF18055">
    <property type="entry name" value="RPN6_N"/>
    <property type="match status" value="1"/>
</dbReference>
<dbReference type="SMART" id="SM00753">
    <property type="entry name" value="PAM"/>
    <property type="match status" value="1"/>
</dbReference>
<dbReference type="SMART" id="SM00088">
    <property type="entry name" value="PINT"/>
    <property type="match status" value="1"/>
</dbReference>
<dbReference type="SUPFAM" id="SSF46785">
    <property type="entry name" value="Winged helix' DNA-binding domain"/>
    <property type="match status" value="1"/>
</dbReference>
<dbReference type="PROSITE" id="PS50250">
    <property type="entry name" value="PCI"/>
    <property type="match status" value="1"/>
</dbReference>
<keyword id="KW-0025">Alternative splicing</keyword>
<keyword id="KW-0647">Proteasome</keyword>
<keyword id="KW-1185">Reference proteome</keyword>
<name>PS11A_CAEEL</name>
<gene>
    <name evidence="11" type="primary">rpn-6.1</name>
    <name type="ORF">F57B9.10</name>
</gene>
<proteinExistence type="evidence at transcript level"/>
<sequence>MRETSSREDTNNIGKAPEMSGGTIMDTMTSLPHQNDQNVIRHLTNLVKSPASGDDDIKKKEDSIMELGNILAQNKQTEELRNMIEQTRPFLVSLGKAKAAKLVRDLVDLCLKIDDQDGDIKVGLVKECIQWATEQNRTFLRQTLTARLVRLYNDLQRYTQALPLAADLIRELKKVDDKDVLVEVELEESKAYYNLSNIGRARASLTGARTTANAIYVNPRMQAALDLQSGILHAADEKDFKTAFSYFYEAFEGYDSVDEKVSALTALKYMLLCKVMLDLPDEVNSLLSAKLALKYNGSDLDAMKAIAAAAQKRSLKDFQVAFGSFPQELQMDPVVRKHFHSLSERMLEKDLCRIIEPYSFVQIEHVAQQIGIDRSKVEKKLSQMILDQKLSGSLDQGEGMLIVFEIAVPDEAYQTALDTIHAMGEVVDALYSNASKIN</sequence>